<keyword id="KW-0414">Isoprene biosynthesis</keyword>
<keyword id="KW-0460">Magnesium</keyword>
<keyword id="KW-0479">Metal-binding</keyword>
<keyword id="KW-1185">Reference proteome</keyword>
<keyword id="KW-0784">Thiamine biosynthesis</keyword>
<keyword id="KW-0786">Thiamine pyrophosphate</keyword>
<keyword id="KW-0808">Transferase</keyword>
<protein>
    <recommendedName>
        <fullName evidence="1">1-deoxy-D-xylulose-5-phosphate synthase</fullName>
        <ecNumber evidence="1">2.2.1.7</ecNumber>
    </recommendedName>
    <alternativeName>
        <fullName evidence="1">1-deoxyxylulose-5-phosphate synthase</fullName>
        <shortName evidence="1">DXP synthase</shortName>
        <shortName evidence="1">DXPS</shortName>
    </alternativeName>
</protein>
<organism>
    <name type="scientific">Anaeromyxobacter sp. (strain Fw109-5)</name>
    <dbReference type="NCBI Taxonomy" id="404589"/>
    <lineage>
        <taxon>Bacteria</taxon>
        <taxon>Pseudomonadati</taxon>
        <taxon>Myxococcota</taxon>
        <taxon>Myxococcia</taxon>
        <taxon>Myxococcales</taxon>
        <taxon>Cystobacterineae</taxon>
        <taxon>Anaeromyxobacteraceae</taxon>
        <taxon>Anaeromyxobacter</taxon>
    </lineage>
</organism>
<comment type="function">
    <text evidence="1">Catalyzes the acyloin condensation reaction between C atoms 2 and 3 of pyruvate and glyceraldehyde 3-phosphate to yield 1-deoxy-D-xylulose-5-phosphate (DXP).</text>
</comment>
<comment type="catalytic activity">
    <reaction evidence="1">
        <text>D-glyceraldehyde 3-phosphate + pyruvate + H(+) = 1-deoxy-D-xylulose 5-phosphate + CO2</text>
        <dbReference type="Rhea" id="RHEA:12605"/>
        <dbReference type="ChEBI" id="CHEBI:15361"/>
        <dbReference type="ChEBI" id="CHEBI:15378"/>
        <dbReference type="ChEBI" id="CHEBI:16526"/>
        <dbReference type="ChEBI" id="CHEBI:57792"/>
        <dbReference type="ChEBI" id="CHEBI:59776"/>
        <dbReference type="EC" id="2.2.1.7"/>
    </reaction>
</comment>
<comment type="cofactor">
    <cofactor evidence="1">
        <name>Mg(2+)</name>
        <dbReference type="ChEBI" id="CHEBI:18420"/>
    </cofactor>
    <text evidence="1">Binds 1 Mg(2+) ion per subunit.</text>
</comment>
<comment type="cofactor">
    <cofactor evidence="1">
        <name>thiamine diphosphate</name>
        <dbReference type="ChEBI" id="CHEBI:58937"/>
    </cofactor>
    <text evidence="1">Binds 1 thiamine pyrophosphate per subunit.</text>
</comment>
<comment type="pathway">
    <text evidence="1">Metabolic intermediate biosynthesis; 1-deoxy-D-xylulose 5-phosphate biosynthesis; 1-deoxy-D-xylulose 5-phosphate from D-glyceraldehyde 3-phosphate and pyruvate: step 1/1.</text>
</comment>
<comment type="subunit">
    <text evidence="1">Homodimer.</text>
</comment>
<comment type="similarity">
    <text evidence="1">Belongs to the transketolase family. DXPS subfamily.</text>
</comment>
<evidence type="ECO:0000255" key="1">
    <source>
        <dbReference type="HAMAP-Rule" id="MF_00315"/>
    </source>
</evidence>
<sequence>MGRLLDSIDSPLDLKRLPVDDLPRLCEEIREEIIQTCAKNGGHLGSSLGAVELNVALHYVYSSPTDKLVWDVGHQAYAHKLLTGRRERFRTIRTEGGLAGFPERHESEHDAFGVGHASTAISAALGMLEAKRLSGAPGKVVALVGDGAMTGGVAFEGLNQAGYLGRDLVVVLNDNEMSISPNVGALSEWFSKKFASRTYNRWRRAVKDFLSHVPKGPEAIDMIRHGINATKALVTPGILFEGLGFHYVGPVDGHDVRSLVETLQKLVIFDGPVLLHAITTKGKGYQPAESDKATRGHGLSFFDVATGKPVKKAAAKAYTDLFAEALCEEMERDPRVVAITAAMLEGTGLIKAKQRFPERTYDVGIAEQHAVTFAAGLACEGVRPVVAIYSTFLQRAYDEIIHDVALQRLPVTFALDRGGLVGADGKTHQGAFDVAYLRCVPNLVVMAPSDENELRHMLHTALHHDGPAAFRFPRGAGEGVALEAPQVLPIGKGRLARAVPGKPDVCVVALGTTLHAALAAAEALAKDGVAASVVDARFAKPLDEELIAGEAERARCVVTIEEGCLPGGFGAACLELFERRGLVAEGLRVKRLGLPDEFVTHGDQGRQRAQLGLDADGIARACRAIVGERAKRGAA</sequence>
<dbReference type="EC" id="2.2.1.7" evidence="1"/>
<dbReference type="EMBL" id="CP000769">
    <property type="protein sequence ID" value="ABS25344.1"/>
    <property type="molecule type" value="Genomic_DNA"/>
</dbReference>
<dbReference type="RefSeq" id="WP_011985450.1">
    <property type="nucleotide sequence ID" value="NC_009675.1"/>
</dbReference>
<dbReference type="SMR" id="A7H9E8"/>
<dbReference type="STRING" id="404589.Anae109_1136"/>
<dbReference type="KEGG" id="afw:Anae109_1136"/>
<dbReference type="eggNOG" id="COG1154">
    <property type="taxonomic scope" value="Bacteria"/>
</dbReference>
<dbReference type="HOGENOM" id="CLU_009227_1_4_7"/>
<dbReference type="OrthoDB" id="9803371at2"/>
<dbReference type="UniPathway" id="UPA00064">
    <property type="reaction ID" value="UER00091"/>
</dbReference>
<dbReference type="Proteomes" id="UP000006382">
    <property type="component" value="Chromosome"/>
</dbReference>
<dbReference type="GO" id="GO:0005829">
    <property type="term" value="C:cytosol"/>
    <property type="evidence" value="ECO:0007669"/>
    <property type="project" value="TreeGrafter"/>
</dbReference>
<dbReference type="GO" id="GO:0008661">
    <property type="term" value="F:1-deoxy-D-xylulose-5-phosphate synthase activity"/>
    <property type="evidence" value="ECO:0007669"/>
    <property type="project" value="UniProtKB-UniRule"/>
</dbReference>
<dbReference type="GO" id="GO:0000287">
    <property type="term" value="F:magnesium ion binding"/>
    <property type="evidence" value="ECO:0007669"/>
    <property type="project" value="UniProtKB-UniRule"/>
</dbReference>
<dbReference type="GO" id="GO:0030976">
    <property type="term" value="F:thiamine pyrophosphate binding"/>
    <property type="evidence" value="ECO:0007669"/>
    <property type="project" value="UniProtKB-UniRule"/>
</dbReference>
<dbReference type="GO" id="GO:0052865">
    <property type="term" value="P:1-deoxy-D-xylulose 5-phosphate biosynthetic process"/>
    <property type="evidence" value="ECO:0007669"/>
    <property type="project" value="UniProtKB-UniPathway"/>
</dbReference>
<dbReference type="GO" id="GO:0019288">
    <property type="term" value="P:isopentenyl diphosphate biosynthetic process, methylerythritol 4-phosphate pathway"/>
    <property type="evidence" value="ECO:0007669"/>
    <property type="project" value="TreeGrafter"/>
</dbReference>
<dbReference type="GO" id="GO:0016114">
    <property type="term" value="P:terpenoid biosynthetic process"/>
    <property type="evidence" value="ECO:0007669"/>
    <property type="project" value="UniProtKB-UniRule"/>
</dbReference>
<dbReference type="GO" id="GO:0009228">
    <property type="term" value="P:thiamine biosynthetic process"/>
    <property type="evidence" value="ECO:0007669"/>
    <property type="project" value="UniProtKB-UniRule"/>
</dbReference>
<dbReference type="CDD" id="cd02007">
    <property type="entry name" value="TPP_DXS"/>
    <property type="match status" value="1"/>
</dbReference>
<dbReference type="CDD" id="cd07033">
    <property type="entry name" value="TPP_PYR_DXS_TK_like"/>
    <property type="match status" value="1"/>
</dbReference>
<dbReference type="FunFam" id="3.40.50.970:FF:000005">
    <property type="entry name" value="1-deoxy-D-xylulose-5-phosphate synthase"/>
    <property type="match status" value="1"/>
</dbReference>
<dbReference type="Gene3D" id="3.40.50.920">
    <property type="match status" value="1"/>
</dbReference>
<dbReference type="Gene3D" id="3.40.50.970">
    <property type="match status" value="2"/>
</dbReference>
<dbReference type="HAMAP" id="MF_00315">
    <property type="entry name" value="DXP_synth"/>
    <property type="match status" value="1"/>
</dbReference>
<dbReference type="InterPro" id="IPR005477">
    <property type="entry name" value="Dxylulose-5-P_synthase"/>
</dbReference>
<dbReference type="InterPro" id="IPR029061">
    <property type="entry name" value="THDP-binding"/>
</dbReference>
<dbReference type="InterPro" id="IPR009014">
    <property type="entry name" value="Transketo_C/PFOR_II"/>
</dbReference>
<dbReference type="InterPro" id="IPR005475">
    <property type="entry name" value="Transketolase-like_Pyr-bd"/>
</dbReference>
<dbReference type="InterPro" id="IPR033248">
    <property type="entry name" value="Transketolase_C"/>
</dbReference>
<dbReference type="InterPro" id="IPR049557">
    <property type="entry name" value="Transketolase_CS"/>
</dbReference>
<dbReference type="NCBIfam" id="TIGR00204">
    <property type="entry name" value="dxs"/>
    <property type="match status" value="1"/>
</dbReference>
<dbReference type="NCBIfam" id="NF003933">
    <property type="entry name" value="PRK05444.2-2"/>
    <property type="match status" value="1"/>
</dbReference>
<dbReference type="PANTHER" id="PTHR43322">
    <property type="entry name" value="1-D-DEOXYXYLULOSE 5-PHOSPHATE SYNTHASE-RELATED"/>
    <property type="match status" value="1"/>
</dbReference>
<dbReference type="PANTHER" id="PTHR43322:SF5">
    <property type="entry name" value="1-DEOXY-D-XYLULOSE-5-PHOSPHATE SYNTHASE, CHLOROPLASTIC"/>
    <property type="match status" value="1"/>
</dbReference>
<dbReference type="Pfam" id="PF13292">
    <property type="entry name" value="DXP_synthase_N"/>
    <property type="match status" value="1"/>
</dbReference>
<dbReference type="Pfam" id="PF02779">
    <property type="entry name" value="Transket_pyr"/>
    <property type="match status" value="1"/>
</dbReference>
<dbReference type="Pfam" id="PF02780">
    <property type="entry name" value="Transketolase_C"/>
    <property type="match status" value="1"/>
</dbReference>
<dbReference type="SMART" id="SM00861">
    <property type="entry name" value="Transket_pyr"/>
    <property type="match status" value="1"/>
</dbReference>
<dbReference type="SUPFAM" id="SSF52518">
    <property type="entry name" value="Thiamin diphosphate-binding fold (THDP-binding)"/>
    <property type="match status" value="2"/>
</dbReference>
<dbReference type="SUPFAM" id="SSF52922">
    <property type="entry name" value="TK C-terminal domain-like"/>
    <property type="match status" value="1"/>
</dbReference>
<dbReference type="PROSITE" id="PS00801">
    <property type="entry name" value="TRANSKETOLASE_1"/>
    <property type="match status" value="1"/>
</dbReference>
<gene>
    <name evidence="1" type="primary">dxs</name>
    <name type="ordered locus">Anae109_1136</name>
</gene>
<name>DXS_ANADF</name>
<reference key="1">
    <citation type="journal article" date="2015" name="Genome Announc.">
        <title>Complete genome sequence of Anaeromyxobacter sp. Fw109-5, an anaerobic, metal-reducing bacterium isolated from a contaminated subsurface environment.</title>
        <authorList>
            <person name="Hwang C."/>
            <person name="Copeland A."/>
            <person name="Lucas S."/>
            <person name="Lapidus A."/>
            <person name="Barry K."/>
            <person name="Glavina Del Rio T."/>
            <person name="Dalin E."/>
            <person name="Tice H."/>
            <person name="Pitluck S."/>
            <person name="Sims D."/>
            <person name="Brettin T."/>
            <person name="Bruce D.C."/>
            <person name="Detter J.C."/>
            <person name="Han C.S."/>
            <person name="Schmutz J."/>
            <person name="Larimer F.W."/>
            <person name="Land M.L."/>
            <person name="Hauser L.J."/>
            <person name="Kyrpides N."/>
            <person name="Lykidis A."/>
            <person name="Richardson P."/>
            <person name="Belieav A."/>
            <person name="Sanford R.A."/>
            <person name="Loeffler F.E."/>
            <person name="Fields M.W."/>
        </authorList>
    </citation>
    <scope>NUCLEOTIDE SEQUENCE [LARGE SCALE GENOMIC DNA]</scope>
    <source>
        <strain>Fw109-5</strain>
    </source>
</reference>
<proteinExistence type="inferred from homology"/>
<feature type="chain" id="PRO_1000019004" description="1-deoxy-D-xylulose-5-phosphate synthase">
    <location>
        <begin position="1"/>
        <end position="635"/>
    </location>
</feature>
<feature type="binding site" evidence="1">
    <location>
        <position position="74"/>
    </location>
    <ligand>
        <name>thiamine diphosphate</name>
        <dbReference type="ChEBI" id="CHEBI:58937"/>
    </ligand>
</feature>
<feature type="binding site" evidence="1">
    <location>
        <begin position="115"/>
        <end position="117"/>
    </location>
    <ligand>
        <name>thiamine diphosphate</name>
        <dbReference type="ChEBI" id="CHEBI:58937"/>
    </ligand>
</feature>
<feature type="binding site" evidence="1">
    <location>
        <position position="146"/>
    </location>
    <ligand>
        <name>Mg(2+)</name>
        <dbReference type="ChEBI" id="CHEBI:18420"/>
    </ligand>
</feature>
<feature type="binding site" evidence="1">
    <location>
        <begin position="147"/>
        <end position="148"/>
    </location>
    <ligand>
        <name>thiamine diphosphate</name>
        <dbReference type="ChEBI" id="CHEBI:58937"/>
    </ligand>
</feature>
<feature type="binding site" evidence="1">
    <location>
        <position position="175"/>
    </location>
    <ligand>
        <name>Mg(2+)</name>
        <dbReference type="ChEBI" id="CHEBI:18420"/>
    </ligand>
</feature>
<feature type="binding site" evidence="1">
    <location>
        <position position="175"/>
    </location>
    <ligand>
        <name>thiamine diphosphate</name>
        <dbReference type="ChEBI" id="CHEBI:58937"/>
    </ligand>
</feature>
<feature type="binding site" evidence="1">
    <location>
        <position position="285"/>
    </location>
    <ligand>
        <name>thiamine diphosphate</name>
        <dbReference type="ChEBI" id="CHEBI:58937"/>
    </ligand>
</feature>
<feature type="binding site" evidence="1">
    <location>
        <position position="367"/>
    </location>
    <ligand>
        <name>thiamine diphosphate</name>
        <dbReference type="ChEBI" id="CHEBI:58937"/>
    </ligand>
</feature>
<accession>A7H9E8</accession>